<name>TRPA_PECAS</name>
<protein>
    <recommendedName>
        <fullName evidence="1">Tryptophan synthase alpha chain</fullName>
        <ecNumber evidence="1">4.2.1.20</ecNumber>
    </recommendedName>
</protein>
<reference key="1">
    <citation type="journal article" date="2004" name="Proc. Natl. Acad. Sci. U.S.A.">
        <title>Genome sequence of the enterobacterial phytopathogen Erwinia carotovora subsp. atroseptica and characterization of virulence factors.</title>
        <authorList>
            <person name="Bell K.S."/>
            <person name="Sebaihia M."/>
            <person name="Pritchard L."/>
            <person name="Holden M.T.G."/>
            <person name="Hyman L.J."/>
            <person name="Holeva M.C."/>
            <person name="Thomson N.R."/>
            <person name="Bentley S.D."/>
            <person name="Churcher L.J.C."/>
            <person name="Mungall K."/>
            <person name="Atkin R."/>
            <person name="Bason N."/>
            <person name="Brooks K."/>
            <person name="Chillingworth T."/>
            <person name="Clark K."/>
            <person name="Doggett J."/>
            <person name="Fraser A."/>
            <person name="Hance Z."/>
            <person name="Hauser H."/>
            <person name="Jagels K."/>
            <person name="Moule S."/>
            <person name="Norbertczak H."/>
            <person name="Ormond D."/>
            <person name="Price C."/>
            <person name="Quail M.A."/>
            <person name="Sanders M."/>
            <person name="Walker D."/>
            <person name="Whitehead S."/>
            <person name="Salmond G.P.C."/>
            <person name="Birch P.R.J."/>
            <person name="Parkhill J."/>
            <person name="Toth I.K."/>
        </authorList>
    </citation>
    <scope>NUCLEOTIDE SEQUENCE [LARGE SCALE GENOMIC DNA]</scope>
    <source>
        <strain>SCRI 1043 / ATCC BAA-672</strain>
    </source>
</reference>
<feature type="chain" id="PRO_0000098781" description="Tryptophan synthase alpha chain">
    <location>
        <begin position="1"/>
        <end position="268"/>
    </location>
</feature>
<feature type="active site" description="Proton acceptor" evidence="1">
    <location>
        <position position="49"/>
    </location>
</feature>
<feature type="active site" description="Proton acceptor" evidence="1">
    <location>
        <position position="60"/>
    </location>
</feature>
<evidence type="ECO:0000255" key="1">
    <source>
        <dbReference type="HAMAP-Rule" id="MF_00131"/>
    </source>
</evidence>
<dbReference type="EC" id="4.2.1.20" evidence="1"/>
<dbReference type="EMBL" id="BX950851">
    <property type="protein sequence ID" value="CAG75204.1"/>
    <property type="molecule type" value="Genomic_DNA"/>
</dbReference>
<dbReference type="RefSeq" id="WP_011093858.1">
    <property type="nucleotide sequence ID" value="NC_004547.2"/>
</dbReference>
<dbReference type="SMR" id="Q6D4T9"/>
<dbReference type="STRING" id="218491.ECA2301"/>
<dbReference type="GeneID" id="57208979"/>
<dbReference type="KEGG" id="eca:ECA2301"/>
<dbReference type="PATRIC" id="fig|218491.5.peg.2330"/>
<dbReference type="eggNOG" id="COG0159">
    <property type="taxonomic scope" value="Bacteria"/>
</dbReference>
<dbReference type="HOGENOM" id="CLU_016734_0_4_6"/>
<dbReference type="OrthoDB" id="9804578at2"/>
<dbReference type="UniPathway" id="UPA00035">
    <property type="reaction ID" value="UER00044"/>
</dbReference>
<dbReference type="Proteomes" id="UP000007966">
    <property type="component" value="Chromosome"/>
</dbReference>
<dbReference type="GO" id="GO:0005829">
    <property type="term" value="C:cytosol"/>
    <property type="evidence" value="ECO:0007669"/>
    <property type="project" value="TreeGrafter"/>
</dbReference>
<dbReference type="GO" id="GO:0004834">
    <property type="term" value="F:tryptophan synthase activity"/>
    <property type="evidence" value="ECO:0007669"/>
    <property type="project" value="UniProtKB-UniRule"/>
</dbReference>
<dbReference type="CDD" id="cd04724">
    <property type="entry name" value="Tryptophan_synthase_alpha"/>
    <property type="match status" value="1"/>
</dbReference>
<dbReference type="FunFam" id="3.20.20.70:FF:000037">
    <property type="entry name" value="Tryptophan synthase alpha chain"/>
    <property type="match status" value="1"/>
</dbReference>
<dbReference type="Gene3D" id="3.20.20.70">
    <property type="entry name" value="Aldolase class I"/>
    <property type="match status" value="1"/>
</dbReference>
<dbReference type="HAMAP" id="MF_00131">
    <property type="entry name" value="Trp_synth_alpha"/>
    <property type="match status" value="1"/>
</dbReference>
<dbReference type="InterPro" id="IPR013785">
    <property type="entry name" value="Aldolase_TIM"/>
</dbReference>
<dbReference type="InterPro" id="IPR011060">
    <property type="entry name" value="RibuloseP-bd_barrel"/>
</dbReference>
<dbReference type="InterPro" id="IPR018204">
    <property type="entry name" value="Trp_synthase_alpha_AS"/>
</dbReference>
<dbReference type="InterPro" id="IPR002028">
    <property type="entry name" value="Trp_synthase_suA"/>
</dbReference>
<dbReference type="NCBIfam" id="TIGR00262">
    <property type="entry name" value="trpA"/>
    <property type="match status" value="1"/>
</dbReference>
<dbReference type="PANTHER" id="PTHR43406:SF1">
    <property type="entry name" value="TRYPTOPHAN SYNTHASE ALPHA CHAIN, CHLOROPLASTIC"/>
    <property type="match status" value="1"/>
</dbReference>
<dbReference type="PANTHER" id="PTHR43406">
    <property type="entry name" value="TRYPTOPHAN SYNTHASE, ALPHA CHAIN"/>
    <property type="match status" value="1"/>
</dbReference>
<dbReference type="Pfam" id="PF00290">
    <property type="entry name" value="Trp_syntA"/>
    <property type="match status" value="1"/>
</dbReference>
<dbReference type="SUPFAM" id="SSF51366">
    <property type="entry name" value="Ribulose-phoshate binding barrel"/>
    <property type="match status" value="1"/>
</dbReference>
<dbReference type="PROSITE" id="PS00167">
    <property type="entry name" value="TRP_SYNTHASE_ALPHA"/>
    <property type="match status" value="1"/>
</dbReference>
<sequence length="268" mass="28690">MERYQQLFTRLSEKKEGAFVPFVTLGDPSPEQSLKIIDTLIAAGADALELGVPFSDPLADGPTIQDANLRAFAAGVTSGQCFEMLAAIRQKYPEIPIGLLMYANLVFSNGIDEFYQRCAEVGVDSVLVADVPVVESAAFRAAALRHGIAPIFICPPNADDELLREIASYGRGYTYLVSRAGVTGAEKRAQLPLNHLVAKLNEYHAAPPLQGFGISDPAQVRETVASGAAGAISGSAIVRIIEKNLNQPDVMLSELHAFVSEMKAATRS</sequence>
<gene>
    <name evidence="1" type="primary">trpA</name>
    <name type="ordered locus">ECA2301</name>
</gene>
<accession>Q6D4T9</accession>
<comment type="function">
    <text evidence="1">The alpha subunit is responsible for the aldol cleavage of indoleglycerol phosphate to indole and glyceraldehyde 3-phosphate.</text>
</comment>
<comment type="catalytic activity">
    <reaction evidence="1">
        <text>(1S,2R)-1-C-(indol-3-yl)glycerol 3-phosphate + L-serine = D-glyceraldehyde 3-phosphate + L-tryptophan + H2O</text>
        <dbReference type="Rhea" id="RHEA:10532"/>
        <dbReference type="ChEBI" id="CHEBI:15377"/>
        <dbReference type="ChEBI" id="CHEBI:33384"/>
        <dbReference type="ChEBI" id="CHEBI:57912"/>
        <dbReference type="ChEBI" id="CHEBI:58866"/>
        <dbReference type="ChEBI" id="CHEBI:59776"/>
        <dbReference type="EC" id="4.2.1.20"/>
    </reaction>
</comment>
<comment type="pathway">
    <text evidence="1">Amino-acid biosynthesis; L-tryptophan biosynthesis; L-tryptophan from chorismate: step 5/5.</text>
</comment>
<comment type="subunit">
    <text evidence="1">Tetramer of two alpha and two beta chains.</text>
</comment>
<comment type="similarity">
    <text evidence="1">Belongs to the TrpA family.</text>
</comment>
<keyword id="KW-0028">Amino-acid biosynthesis</keyword>
<keyword id="KW-0057">Aromatic amino acid biosynthesis</keyword>
<keyword id="KW-0456">Lyase</keyword>
<keyword id="KW-1185">Reference proteome</keyword>
<keyword id="KW-0822">Tryptophan biosynthesis</keyword>
<proteinExistence type="inferred from homology"/>
<organism>
    <name type="scientific">Pectobacterium atrosepticum (strain SCRI 1043 / ATCC BAA-672)</name>
    <name type="common">Erwinia carotovora subsp. atroseptica</name>
    <dbReference type="NCBI Taxonomy" id="218491"/>
    <lineage>
        <taxon>Bacteria</taxon>
        <taxon>Pseudomonadati</taxon>
        <taxon>Pseudomonadota</taxon>
        <taxon>Gammaproteobacteria</taxon>
        <taxon>Enterobacterales</taxon>
        <taxon>Pectobacteriaceae</taxon>
        <taxon>Pectobacterium</taxon>
    </lineage>
</organism>